<organism>
    <name type="scientific">Histophilus somni</name>
    <name type="common">Haemophilus somnus</name>
    <dbReference type="NCBI Taxonomy" id="731"/>
    <lineage>
        <taxon>Bacteria</taxon>
        <taxon>Pseudomonadati</taxon>
        <taxon>Pseudomonadota</taxon>
        <taxon>Gammaproteobacteria</taxon>
        <taxon>Pasteurellales</taxon>
        <taxon>Pasteurellaceae</taxon>
        <taxon>Histophilus</taxon>
    </lineage>
</organism>
<proteinExistence type="inferred from homology"/>
<dbReference type="EMBL" id="S75161">
    <property type="protein sequence ID" value="AAB20822.1"/>
    <property type="molecule type" value="Genomic_DNA"/>
</dbReference>
<dbReference type="PIR" id="C43310">
    <property type="entry name" value="C43310"/>
</dbReference>
<dbReference type="SMR" id="P31784"/>
<dbReference type="GO" id="GO:0005737">
    <property type="term" value="C:cytoplasm"/>
    <property type="evidence" value="ECO:0007669"/>
    <property type="project" value="TreeGrafter"/>
</dbReference>
<dbReference type="CDD" id="cd03186">
    <property type="entry name" value="GST_C_SspA"/>
    <property type="match status" value="1"/>
</dbReference>
<dbReference type="CDD" id="cd03059">
    <property type="entry name" value="GST_N_SspA"/>
    <property type="match status" value="1"/>
</dbReference>
<dbReference type="Gene3D" id="1.20.1050.10">
    <property type="match status" value="1"/>
</dbReference>
<dbReference type="Gene3D" id="3.40.30.10">
    <property type="entry name" value="Glutaredoxin"/>
    <property type="match status" value="1"/>
</dbReference>
<dbReference type="InterPro" id="IPR010987">
    <property type="entry name" value="Glutathione-S-Trfase_C-like"/>
</dbReference>
<dbReference type="InterPro" id="IPR036282">
    <property type="entry name" value="Glutathione-S-Trfase_C_sf"/>
</dbReference>
<dbReference type="InterPro" id="IPR040079">
    <property type="entry name" value="Glutathione_S-Trfase"/>
</dbReference>
<dbReference type="InterPro" id="IPR004045">
    <property type="entry name" value="Glutathione_S-Trfase_N"/>
</dbReference>
<dbReference type="InterPro" id="IPR004046">
    <property type="entry name" value="GST_C"/>
</dbReference>
<dbReference type="InterPro" id="IPR050983">
    <property type="entry name" value="GST_Omega/HSP26"/>
</dbReference>
<dbReference type="InterPro" id="IPR034342">
    <property type="entry name" value="SspA_C"/>
</dbReference>
<dbReference type="InterPro" id="IPR034341">
    <property type="entry name" value="SspA_N"/>
</dbReference>
<dbReference type="InterPro" id="IPR036249">
    <property type="entry name" value="Thioredoxin-like_sf"/>
</dbReference>
<dbReference type="NCBIfam" id="NF007016">
    <property type="entry name" value="PRK09481.1"/>
    <property type="match status" value="1"/>
</dbReference>
<dbReference type="PANTHER" id="PTHR43968">
    <property type="match status" value="1"/>
</dbReference>
<dbReference type="PANTHER" id="PTHR43968:SF6">
    <property type="entry name" value="GLUTATHIONE S-TRANSFERASE OMEGA"/>
    <property type="match status" value="1"/>
</dbReference>
<dbReference type="Pfam" id="PF00043">
    <property type="entry name" value="GST_C"/>
    <property type="match status" value="1"/>
</dbReference>
<dbReference type="Pfam" id="PF13409">
    <property type="entry name" value="GST_N_2"/>
    <property type="match status" value="1"/>
</dbReference>
<dbReference type="SFLD" id="SFLDS00019">
    <property type="entry name" value="Glutathione_Transferase_(cytos"/>
    <property type="match status" value="1"/>
</dbReference>
<dbReference type="SFLD" id="SFLDG00358">
    <property type="entry name" value="Main_(cytGST)"/>
    <property type="match status" value="1"/>
</dbReference>
<dbReference type="SUPFAM" id="SSF47616">
    <property type="entry name" value="GST C-terminal domain-like"/>
    <property type="match status" value="1"/>
</dbReference>
<dbReference type="SUPFAM" id="SSF52833">
    <property type="entry name" value="Thioredoxin-like"/>
    <property type="match status" value="1"/>
</dbReference>
<dbReference type="PROSITE" id="PS50405">
    <property type="entry name" value="GST_CTER"/>
    <property type="match status" value="1"/>
</dbReference>
<dbReference type="PROSITE" id="PS50404">
    <property type="entry name" value="GST_NTER"/>
    <property type="match status" value="1"/>
</dbReference>
<sequence length="212" mass="24429">MTSAANKRSIMTLFLDKVDIYCHQVRIVLAEKGVAYATEIVDSESISEDLMELNPYGTIPTLVDRDLVLFNSRIIMEYLDERFPHPPLMPVYPVSRGKSRLLMLRIEQDWYPVLEKAEKGSESERAIALKQLKEEILAIAPVFSQSLYFMSEEFRLVDCYIAPLLWRMQQLGVVFTGTGSKAIKSYMERVFQRDSFLQSVGEMTPKNLMEDK</sequence>
<gene>
    <name type="primary">sspA</name>
    <name type="synonym">ssp</name>
</gene>
<accession>P31784</accession>
<feature type="chain" id="PRO_0000185881" description="Stringent starvation protein A homolog">
    <location>
        <begin position="1"/>
        <end position="212"/>
    </location>
</feature>
<feature type="domain" description="GST N-terminal">
    <location>
        <begin position="9"/>
        <end position="87"/>
    </location>
</feature>
<feature type="domain" description="GST C-terminal">
    <location>
        <begin position="92"/>
        <end position="212"/>
    </location>
</feature>
<reference key="1">
    <citation type="journal article" date="1992" name="J. Bacteriol.">
        <title>Cloning, sequencing, expression, and functional studies of a 15,000-molecular-weight Haemophilus somnus antigen similar to Escherichia coli ribosomal protein S9.</title>
        <authorList>
            <person name="Theisen M."/>
            <person name="Potter A.A."/>
        </authorList>
    </citation>
    <scope>NUCLEOTIDE SEQUENCE [GENOMIC DNA]</scope>
    <source>
        <strain>HS25</strain>
    </source>
</reference>
<name>SSPA_HISSO</name>
<protein>
    <recommendedName>
        <fullName>Stringent starvation protein A homolog</fullName>
    </recommendedName>
</protein>
<comment type="function">
    <text evidence="1">Forms an equimolar complex with the RNA polymerase holoenzyme (RNAP) but not with the core enzyme.</text>
</comment>
<comment type="similarity">
    <text evidence="2">Belongs to the GST superfamily. HSP26 family.</text>
</comment>
<evidence type="ECO:0000250" key="1"/>
<evidence type="ECO:0000305" key="2"/>